<name>MYOB5_ARATH</name>
<comment type="function">
    <text evidence="1">Probable membrane-anchored myosin receptors.</text>
</comment>
<comment type="subcellular location">
    <subcellularLocation>
        <location evidence="2">Membrane</location>
        <topology evidence="2">Single-pass membrane protein</topology>
    </subcellularLocation>
</comment>
<evidence type="ECO:0000250" key="1">
    <source>
        <dbReference type="UniProtKB" id="F4HXQ7"/>
    </source>
</evidence>
<evidence type="ECO:0000255" key="2"/>
<evidence type="ECO:0000255" key="3">
    <source>
        <dbReference type="PROSITE-ProRule" id="PRU01111"/>
    </source>
</evidence>
<evidence type="ECO:0000305" key="4"/>
<evidence type="ECO:0000312" key="5">
    <source>
        <dbReference type="Araport" id="AT1G18990"/>
    </source>
</evidence>
<evidence type="ECO:0000312" key="6">
    <source>
        <dbReference type="EMBL" id="AAF79302.1"/>
    </source>
</evidence>
<evidence type="ECO:0000312" key="7">
    <source>
        <dbReference type="Proteomes" id="UP000006548"/>
    </source>
</evidence>
<dbReference type="EMBL" id="AC068602">
    <property type="protein sequence ID" value="AAF79302.1"/>
    <property type="molecule type" value="Genomic_DNA"/>
</dbReference>
<dbReference type="EMBL" id="CP002684">
    <property type="protein sequence ID" value="AEE29787.1"/>
    <property type="molecule type" value="Genomic_DNA"/>
</dbReference>
<dbReference type="EMBL" id="BT002932">
    <property type="protein sequence ID" value="AAO22746.1"/>
    <property type="molecule type" value="mRNA"/>
</dbReference>
<dbReference type="RefSeq" id="NP_173333.1">
    <property type="nucleotide sequence ID" value="NM_101756.3"/>
</dbReference>
<dbReference type="SMR" id="Q9LMC8"/>
<dbReference type="FunCoup" id="Q9LMC8">
    <property type="interactions" value="1"/>
</dbReference>
<dbReference type="STRING" id="3702.Q9LMC8"/>
<dbReference type="PaxDb" id="3702-AT1G18990.1"/>
<dbReference type="ProteomicsDB" id="251191"/>
<dbReference type="EnsemblPlants" id="AT1G18990.1">
    <property type="protein sequence ID" value="AT1G18990.1"/>
    <property type="gene ID" value="AT1G18990"/>
</dbReference>
<dbReference type="GeneID" id="838480"/>
<dbReference type="Gramene" id="AT1G18990.1">
    <property type="protein sequence ID" value="AT1G18990.1"/>
    <property type="gene ID" value="AT1G18990"/>
</dbReference>
<dbReference type="KEGG" id="ath:AT1G18990"/>
<dbReference type="Araport" id="AT1G18990"/>
<dbReference type="TAIR" id="AT1G18990"/>
<dbReference type="eggNOG" id="ENOG502R2U1">
    <property type="taxonomic scope" value="Eukaryota"/>
</dbReference>
<dbReference type="HOGENOM" id="CLU_009392_3_0_1"/>
<dbReference type="InParanoid" id="Q9LMC8"/>
<dbReference type="OMA" id="HRNPNFY"/>
<dbReference type="OrthoDB" id="1853282at2759"/>
<dbReference type="PhylomeDB" id="Q9LMC8"/>
<dbReference type="PRO" id="PR:Q9LMC8"/>
<dbReference type="Proteomes" id="UP000006548">
    <property type="component" value="Chromosome 1"/>
</dbReference>
<dbReference type="ExpressionAtlas" id="Q9LMC8">
    <property type="expression patterns" value="baseline and differential"/>
</dbReference>
<dbReference type="GO" id="GO:0016020">
    <property type="term" value="C:membrane"/>
    <property type="evidence" value="ECO:0007669"/>
    <property type="project" value="UniProtKB-SubCell"/>
</dbReference>
<dbReference type="GO" id="GO:0080115">
    <property type="term" value="F:myosin XI tail binding"/>
    <property type="evidence" value="ECO:0007669"/>
    <property type="project" value="UniProtKB-ARBA"/>
</dbReference>
<dbReference type="InterPro" id="IPR007656">
    <property type="entry name" value="GTD-bd"/>
</dbReference>
<dbReference type="InterPro" id="IPR039306">
    <property type="entry name" value="MYOB"/>
</dbReference>
<dbReference type="PANTHER" id="PTHR31448">
    <property type="entry name" value="MYOSIN-BINDING PROTEIN 2"/>
    <property type="match status" value="1"/>
</dbReference>
<dbReference type="PANTHER" id="PTHR31448:SF53">
    <property type="entry name" value="MYOSIN-BINDING PROTEIN 5-RELATED"/>
    <property type="match status" value="1"/>
</dbReference>
<dbReference type="Pfam" id="PF04576">
    <property type="entry name" value="Zein-binding"/>
    <property type="match status" value="1"/>
</dbReference>
<dbReference type="PROSITE" id="PS51775">
    <property type="entry name" value="GTD_BINDING"/>
    <property type="match status" value="1"/>
</dbReference>
<protein>
    <recommendedName>
        <fullName evidence="4">Probable myosin-binding protein 5</fullName>
    </recommendedName>
</protein>
<feature type="chain" id="PRO_0000431711" description="Probable myosin-binding protein 5">
    <location>
        <begin position="1"/>
        <end position="524"/>
    </location>
</feature>
<feature type="transmembrane region" description="Helical" evidence="2">
    <location>
        <begin position="20"/>
        <end position="40"/>
    </location>
</feature>
<feature type="domain" description="GTD-binding" evidence="3">
    <location>
        <begin position="299"/>
        <end position="397"/>
    </location>
</feature>
<feature type="coiled-coil region" evidence="2">
    <location>
        <begin position="462"/>
        <end position="490"/>
    </location>
</feature>
<accession>Q9LMC8</accession>
<gene>
    <name evidence="4" type="primary">MYOB5</name>
    <name evidence="5" type="ordered locus">At1g18990</name>
    <name evidence="6" type="ORF">F14D16.14</name>
</gene>
<sequence>MSNRSFKNFIEEELGTFPQFLIYALLEWILIIILFIDGFLAFFSNQIAKFFDLKIPCLLCTRLDHVLVSRNPDFYYNDSICDAHKKNVSSLAYCHVHKKLSEIKRMCEGCLLSFATEKETDVDTYKSLIGILHKDLELLIDDERELQLAFPVAGSKKDENFYQVENRTNNSNDRFQRQQRCSCCGQIMKLKSDKPKSNNQSFFGAPSPSPRVSFNQRTLDLSNIKYTDLPEDDDALNTKGASLDAVDDRTPSFVKGGNKFFGIPLSDSAQNSPRWSVRSMKKSFVDQNGLESEVLDGDSILQHLNRQVRLDRKSLMDLYMELDEERSASAVAANNAMAMITRLQAEKAAVQMEALQYQRMMDEQAEYDQEALQSMNGLLVKREEEMKELEAGIEVYRLRYGLLREERGEAEEFLDEETKPVSDLPVCSSNHEEDLEQMKDSAEDSIGNNGVMIIEEEKENGSRKDMLVKEISEITERLNAIESKGELLQQISDVLDVSEGEAILLQISQNLHMLRSFIEMPTES</sequence>
<keyword id="KW-0175">Coiled coil</keyword>
<keyword id="KW-0472">Membrane</keyword>
<keyword id="KW-1185">Reference proteome</keyword>
<keyword id="KW-0812">Transmembrane</keyword>
<keyword id="KW-1133">Transmembrane helix</keyword>
<organism evidence="7">
    <name type="scientific">Arabidopsis thaliana</name>
    <name type="common">Mouse-ear cress</name>
    <dbReference type="NCBI Taxonomy" id="3702"/>
    <lineage>
        <taxon>Eukaryota</taxon>
        <taxon>Viridiplantae</taxon>
        <taxon>Streptophyta</taxon>
        <taxon>Embryophyta</taxon>
        <taxon>Tracheophyta</taxon>
        <taxon>Spermatophyta</taxon>
        <taxon>Magnoliopsida</taxon>
        <taxon>eudicotyledons</taxon>
        <taxon>Gunneridae</taxon>
        <taxon>Pentapetalae</taxon>
        <taxon>rosids</taxon>
        <taxon>malvids</taxon>
        <taxon>Brassicales</taxon>
        <taxon>Brassicaceae</taxon>
        <taxon>Camelineae</taxon>
        <taxon>Arabidopsis</taxon>
    </lineage>
</organism>
<proteinExistence type="evidence at transcript level"/>
<reference key="1">
    <citation type="journal article" date="2000" name="Nature">
        <title>Sequence and analysis of chromosome 1 of the plant Arabidopsis thaliana.</title>
        <authorList>
            <person name="Theologis A."/>
            <person name="Ecker J.R."/>
            <person name="Palm C.J."/>
            <person name="Federspiel N.A."/>
            <person name="Kaul S."/>
            <person name="White O."/>
            <person name="Alonso J."/>
            <person name="Altafi H."/>
            <person name="Araujo R."/>
            <person name="Bowman C.L."/>
            <person name="Brooks S.Y."/>
            <person name="Buehler E."/>
            <person name="Chan A."/>
            <person name="Chao Q."/>
            <person name="Chen H."/>
            <person name="Cheuk R.F."/>
            <person name="Chin C.W."/>
            <person name="Chung M.K."/>
            <person name="Conn L."/>
            <person name="Conway A.B."/>
            <person name="Conway A.R."/>
            <person name="Creasy T.H."/>
            <person name="Dewar K."/>
            <person name="Dunn P."/>
            <person name="Etgu P."/>
            <person name="Feldblyum T.V."/>
            <person name="Feng J.-D."/>
            <person name="Fong B."/>
            <person name="Fujii C.Y."/>
            <person name="Gill J.E."/>
            <person name="Goldsmith A.D."/>
            <person name="Haas B."/>
            <person name="Hansen N.F."/>
            <person name="Hughes B."/>
            <person name="Huizar L."/>
            <person name="Hunter J.L."/>
            <person name="Jenkins J."/>
            <person name="Johnson-Hopson C."/>
            <person name="Khan S."/>
            <person name="Khaykin E."/>
            <person name="Kim C.J."/>
            <person name="Koo H.L."/>
            <person name="Kremenetskaia I."/>
            <person name="Kurtz D.B."/>
            <person name="Kwan A."/>
            <person name="Lam B."/>
            <person name="Langin-Hooper S."/>
            <person name="Lee A."/>
            <person name="Lee J.M."/>
            <person name="Lenz C.A."/>
            <person name="Li J.H."/>
            <person name="Li Y.-P."/>
            <person name="Lin X."/>
            <person name="Liu S.X."/>
            <person name="Liu Z.A."/>
            <person name="Luros J.S."/>
            <person name="Maiti R."/>
            <person name="Marziali A."/>
            <person name="Militscher J."/>
            <person name="Miranda M."/>
            <person name="Nguyen M."/>
            <person name="Nierman W.C."/>
            <person name="Osborne B.I."/>
            <person name="Pai G."/>
            <person name="Peterson J."/>
            <person name="Pham P.K."/>
            <person name="Rizzo M."/>
            <person name="Rooney T."/>
            <person name="Rowley D."/>
            <person name="Sakano H."/>
            <person name="Salzberg S.L."/>
            <person name="Schwartz J.R."/>
            <person name="Shinn P."/>
            <person name="Southwick A.M."/>
            <person name="Sun H."/>
            <person name="Tallon L.J."/>
            <person name="Tambunga G."/>
            <person name="Toriumi M.J."/>
            <person name="Town C.D."/>
            <person name="Utterback T."/>
            <person name="Van Aken S."/>
            <person name="Vaysberg M."/>
            <person name="Vysotskaia V.S."/>
            <person name="Walker M."/>
            <person name="Wu D."/>
            <person name="Yu G."/>
            <person name="Fraser C.M."/>
            <person name="Venter J.C."/>
            <person name="Davis R.W."/>
        </authorList>
    </citation>
    <scope>NUCLEOTIDE SEQUENCE [LARGE SCALE GENOMIC DNA]</scope>
    <source>
        <strain>cv. Columbia</strain>
    </source>
</reference>
<reference key="2">
    <citation type="journal article" date="2017" name="Plant J.">
        <title>Araport11: a complete reannotation of the Arabidopsis thaliana reference genome.</title>
        <authorList>
            <person name="Cheng C.Y."/>
            <person name="Krishnakumar V."/>
            <person name="Chan A.P."/>
            <person name="Thibaud-Nissen F."/>
            <person name="Schobel S."/>
            <person name="Town C.D."/>
        </authorList>
    </citation>
    <scope>GENOME REANNOTATION</scope>
    <source>
        <strain>cv. Columbia</strain>
    </source>
</reference>
<reference key="3">
    <citation type="journal article" date="2003" name="Science">
        <title>Empirical analysis of transcriptional activity in the Arabidopsis genome.</title>
        <authorList>
            <person name="Yamada K."/>
            <person name="Lim J."/>
            <person name="Dale J.M."/>
            <person name="Chen H."/>
            <person name="Shinn P."/>
            <person name="Palm C.J."/>
            <person name="Southwick A.M."/>
            <person name="Wu H.C."/>
            <person name="Kim C.J."/>
            <person name="Nguyen M."/>
            <person name="Pham P.K."/>
            <person name="Cheuk R.F."/>
            <person name="Karlin-Newmann G."/>
            <person name="Liu S.X."/>
            <person name="Lam B."/>
            <person name="Sakano H."/>
            <person name="Wu T."/>
            <person name="Yu G."/>
            <person name="Miranda M."/>
            <person name="Quach H.L."/>
            <person name="Tripp M."/>
            <person name="Chang C.H."/>
            <person name="Lee J.M."/>
            <person name="Toriumi M.J."/>
            <person name="Chan M.M."/>
            <person name="Tang C.C."/>
            <person name="Onodera C.S."/>
            <person name="Deng J.M."/>
            <person name="Akiyama K."/>
            <person name="Ansari Y."/>
            <person name="Arakawa T."/>
            <person name="Banh J."/>
            <person name="Banno F."/>
            <person name="Bowser L."/>
            <person name="Brooks S.Y."/>
            <person name="Carninci P."/>
            <person name="Chao Q."/>
            <person name="Choy N."/>
            <person name="Enju A."/>
            <person name="Goldsmith A.D."/>
            <person name="Gurjal M."/>
            <person name="Hansen N.F."/>
            <person name="Hayashizaki Y."/>
            <person name="Johnson-Hopson C."/>
            <person name="Hsuan V.W."/>
            <person name="Iida K."/>
            <person name="Karnes M."/>
            <person name="Khan S."/>
            <person name="Koesema E."/>
            <person name="Ishida J."/>
            <person name="Jiang P.X."/>
            <person name="Jones T."/>
            <person name="Kawai J."/>
            <person name="Kamiya A."/>
            <person name="Meyers C."/>
            <person name="Nakajima M."/>
            <person name="Narusaka M."/>
            <person name="Seki M."/>
            <person name="Sakurai T."/>
            <person name="Satou M."/>
            <person name="Tamse R."/>
            <person name="Vaysberg M."/>
            <person name="Wallender E.K."/>
            <person name="Wong C."/>
            <person name="Yamamura Y."/>
            <person name="Yuan S."/>
            <person name="Shinozaki K."/>
            <person name="Davis R.W."/>
            <person name="Theologis A."/>
            <person name="Ecker J.R."/>
        </authorList>
    </citation>
    <scope>NUCLEOTIDE SEQUENCE [LARGE SCALE MRNA]</scope>
    <source>
        <strain>cv. Columbia</strain>
    </source>
</reference>